<keyword id="KW-1185">Reference proteome</keyword>
<keyword id="KW-0686">Riboflavin biosynthesis</keyword>
<keyword id="KW-0808">Transferase</keyword>
<accession>A1SJG9</accession>
<dbReference type="EC" id="2.5.1.78" evidence="1"/>
<dbReference type="EMBL" id="CP000509">
    <property type="protein sequence ID" value="ABL81954.1"/>
    <property type="molecule type" value="Genomic_DNA"/>
</dbReference>
<dbReference type="RefSeq" id="WP_011755895.1">
    <property type="nucleotide sequence ID" value="NC_008699.1"/>
</dbReference>
<dbReference type="SMR" id="A1SJG9"/>
<dbReference type="STRING" id="196162.Noca_2450"/>
<dbReference type="KEGG" id="nca:Noca_2450"/>
<dbReference type="eggNOG" id="COG0054">
    <property type="taxonomic scope" value="Bacteria"/>
</dbReference>
<dbReference type="HOGENOM" id="CLU_089358_1_2_11"/>
<dbReference type="OrthoDB" id="9809709at2"/>
<dbReference type="UniPathway" id="UPA00275">
    <property type="reaction ID" value="UER00404"/>
</dbReference>
<dbReference type="Proteomes" id="UP000000640">
    <property type="component" value="Chromosome"/>
</dbReference>
<dbReference type="GO" id="GO:0005829">
    <property type="term" value="C:cytosol"/>
    <property type="evidence" value="ECO:0007669"/>
    <property type="project" value="TreeGrafter"/>
</dbReference>
<dbReference type="GO" id="GO:0009349">
    <property type="term" value="C:riboflavin synthase complex"/>
    <property type="evidence" value="ECO:0007669"/>
    <property type="project" value="InterPro"/>
</dbReference>
<dbReference type="GO" id="GO:0000906">
    <property type="term" value="F:6,7-dimethyl-8-ribityllumazine synthase activity"/>
    <property type="evidence" value="ECO:0007669"/>
    <property type="project" value="UniProtKB-UniRule"/>
</dbReference>
<dbReference type="GO" id="GO:0009231">
    <property type="term" value="P:riboflavin biosynthetic process"/>
    <property type="evidence" value="ECO:0007669"/>
    <property type="project" value="UniProtKB-UniRule"/>
</dbReference>
<dbReference type="CDD" id="cd09209">
    <property type="entry name" value="Lumazine_synthase-I"/>
    <property type="match status" value="1"/>
</dbReference>
<dbReference type="Gene3D" id="3.40.50.960">
    <property type="entry name" value="Lumazine/riboflavin synthase"/>
    <property type="match status" value="1"/>
</dbReference>
<dbReference type="HAMAP" id="MF_00178">
    <property type="entry name" value="Lumazine_synth"/>
    <property type="match status" value="1"/>
</dbReference>
<dbReference type="InterPro" id="IPR034964">
    <property type="entry name" value="LS"/>
</dbReference>
<dbReference type="InterPro" id="IPR002180">
    <property type="entry name" value="LS/RS"/>
</dbReference>
<dbReference type="InterPro" id="IPR036467">
    <property type="entry name" value="LS/RS_sf"/>
</dbReference>
<dbReference type="NCBIfam" id="TIGR00114">
    <property type="entry name" value="lumazine-synth"/>
    <property type="match status" value="1"/>
</dbReference>
<dbReference type="PANTHER" id="PTHR21058:SF0">
    <property type="entry name" value="6,7-DIMETHYL-8-RIBITYLLUMAZINE SYNTHASE"/>
    <property type="match status" value="1"/>
</dbReference>
<dbReference type="PANTHER" id="PTHR21058">
    <property type="entry name" value="6,7-DIMETHYL-8-RIBITYLLUMAZINE SYNTHASE DMRL SYNTHASE LUMAZINE SYNTHASE"/>
    <property type="match status" value="1"/>
</dbReference>
<dbReference type="Pfam" id="PF00885">
    <property type="entry name" value="DMRL_synthase"/>
    <property type="match status" value="1"/>
</dbReference>
<dbReference type="SUPFAM" id="SSF52121">
    <property type="entry name" value="Lumazine synthase"/>
    <property type="match status" value="1"/>
</dbReference>
<proteinExistence type="inferred from homology"/>
<protein>
    <recommendedName>
        <fullName evidence="1">6,7-dimethyl-8-ribityllumazine synthase</fullName>
        <shortName evidence="1">DMRL synthase</shortName>
        <shortName evidence="1">LS</shortName>
        <shortName evidence="1">Lumazine synthase</shortName>
        <ecNumber evidence="1">2.5.1.78</ecNumber>
    </recommendedName>
</protein>
<name>RISB_NOCSJ</name>
<reference key="1">
    <citation type="submission" date="2006-12" db="EMBL/GenBank/DDBJ databases">
        <title>Complete sequence of chromosome 1 of Nocardioides sp. JS614.</title>
        <authorList>
            <person name="Copeland A."/>
            <person name="Lucas S."/>
            <person name="Lapidus A."/>
            <person name="Barry K."/>
            <person name="Detter J.C."/>
            <person name="Glavina del Rio T."/>
            <person name="Hammon N."/>
            <person name="Israni S."/>
            <person name="Dalin E."/>
            <person name="Tice H."/>
            <person name="Pitluck S."/>
            <person name="Thompson L.S."/>
            <person name="Brettin T."/>
            <person name="Bruce D."/>
            <person name="Han C."/>
            <person name="Tapia R."/>
            <person name="Schmutz J."/>
            <person name="Larimer F."/>
            <person name="Land M."/>
            <person name="Hauser L."/>
            <person name="Kyrpides N."/>
            <person name="Kim E."/>
            <person name="Mattes T."/>
            <person name="Gossett J."/>
            <person name="Richardson P."/>
        </authorList>
    </citation>
    <scope>NUCLEOTIDE SEQUENCE [LARGE SCALE GENOMIC DNA]</scope>
    <source>
        <strain>ATCC BAA-499 / JS614</strain>
    </source>
</reference>
<comment type="function">
    <text evidence="1">Catalyzes the formation of 6,7-dimethyl-8-ribityllumazine by condensation of 5-amino-6-(D-ribitylamino)uracil with 3,4-dihydroxy-2-butanone 4-phosphate. This is the penultimate step in the biosynthesis of riboflavin.</text>
</comment>
<comment type="catalytic activity">
    <reaction evidence="1">
        <text>(2S)-2-hydroxy-3-oxobutyl phosphate + 5-amino-6-(D-ribitylamino)uracil = 6,7-dimethyl-8-(1-D-ribityl)lumazine + phosphate + 2 H2O + H(+)</text>
        <dbReference type="Rhea" id="RHEA:26152"/>
        <dbReference type="ChEBI" id="CHEBI:15377"/>
        <dbReference type="ChEBI" id="CHEBI:15378"/>
        <dbReference type="ChEBI" id="CHEBI:15934"/>
        <dbReference type="ChEBI" id="CHEBI:43474"/>
        <dbReference type="ChEBI" id="CHEBI:58201"/>
        <dbReference type="ChEBI" id="CHEBI:58830"/>
        <dbReference type="EC" id="2.5.1.78"/>
    </reaction>
</comment>
<comment type="pathway">
    <text evidence="1">Cofactor biosynthesis; riboflavin biosynthesis; riboflavin from 2-hydroxy-3-oxobutyl phosphate and 5-amino-6-(D-ribitylamino)uracil: step 1/2.</text>
</comment>
<comment type="similarity">
    <text evidence="1">Belongs to the DMRL synthase family.</text>
</comment>
<feature type="chain" id="PRO_1000040468" description="6,7-dimethyl-8-ribityllumazine synthase">
    <location>
        <begin position="1"/>
        <end position="161"/>
    </location>
</feature>
<feature type="active site" description="Proton donor" evidence="1">
    <location>
        <position position="89"/>
    </location>
</feature>
<feature type="binding site" evidence="1">
    <location>
        <position position="26"/>
    </location>
    <ligand>
        <name>5-amino-6-(D-ribitylamino)uracil</name>
        <dbReference type="ChEBI" id="CHEBI:15934"/>
    </ligand>
</feature>
<feature type="binding site" evidence="1">
    <location>
        <begin position="58"/>
        <end position="60"/>
    </location>
    <ligand>
        <name>5-amino-6-(D-ribitylamino)uracil</name>
        <dbReference type="ChEBI" id="CHEBI:15934"/>
    </ligand>
</feature>
<feature type="binding site" evidence="1">
    <location>
        <begin position="81"/>
        <end position="83"/>
    </location>
    <ligand>
        <name>5-amino-6-(D-ribitylamino)uracil</name>
        <dbReference type="ChEBI" id="CHEBI:15934"/>
    </ligand>
</feature>
<feature type="binding site" evidence="1">
    <location>
        <begin position="86"/>
        <end position="87"/>
    </location>
    <ligand>
        <name>(2S)-2-hydroxy-3-oxobutyl phosphate</name>
        <dbReference type="ChEBI" id="CHEBI:58830"/>
    </ligand>
</feature>
<feature type="binding site" evidence="1">
    <location>
        <position position="114"/>
    </location>
    <ligand>
        <name>5-amino-6-(D-ribitylamino)uracil</name>
        <dbReference type="ChEBI" id="CHEBI:15934"/>
    </ligand>
</feature>
<feature type="binding site" evidence="1">
    <location>
        <position position="128"/>
    </location>
    <ligand>
        <name>(2S)-2-hydroxy-3-oxobutyl phosphate</name>
        <dbReference type="ChEBI" id="CHEBI:58830"/>
    </ligand>
</feature>
<organism>
    <name type="scientific">Nocardioides sp. (strain ATCC BAA-499 / JS614)</name>
    <dbReference type="NCBI Taxonomy" id="196162"/>
    <lineage>
        <taxon>Bacteria</taxon>
        <taxon>Bacillati</taxon>
        <taxon>Actinomycetota</taxon>
        <taxon>Actinomycetes</taxon>
        <taxon>Propionibacteriales</taxon>
        <taxon>Nocardioidaceae</taxon>
        <taxon>Nocardioides</taxon>
    </lineage>
</organism>
<gene>
    <name evidence="1" type="primary">ribH</name>
    <name type="ordered locus">Noca_2450</name>
</gene>
<sequence length="161" mass="16798">MSGHGAPAPAPVDCSDLRVAVVAASWHTQVMDGLIAGAQRALADYHVAEHRLVRVPGAFELAVVADALARQHYDVVVALGVVIRGGTPHFDYVCQAVTEGLVRVALDRSLPVGFGVLTCDGDQQALDRAGLEGSKEDKGYEATSAALLTARTLKELGTTAP</sequence>
<evidence type="ECO:0000255" key="1">
    <source>
        <dbReference type="HAMAP-Rule" id="MF_00178"/>
    </source>
</evidence>